<dbReference type="EC" id="1.5.1.5" evidence="1"/>
<dbReference type="EC" id="3.5.4.9" evidence="1"/>
<dbReference type="EMBL" id="AP009484">
    <property type="protein sequence ID" value="BAH17393.1"/>
    <property type="molecule type" value="Genomic_DNA"/>
</dbReference>
<dbReference type="RefSeq" id="WP_012656594.1">
    <property type="nucleotide sequence ID" value="NC_011999.1"/>
</dbReference>
<dbReference type="SMR" id="B9EAY2"/>
<dbReference type="STRING" id="458233.MCCL_0686"/>
<dbReference type="KEGG" id="mcl:MCCL_0686"/>
<dbReference type="eggNOG" id="COG0190">
    <property type="taxonomic scope" value="Bacteria"/>
</dbReference>
<dbReference type="HOGENOM" id="CLU_034045_2_1_9"/>
<dbReference type="OrthoDB" id="9803580at2"/>
<dbReference type="UniPathway" id="UPA00193"/>
<dbReference type="Proteomes" id="UP000001383">
    <property type="component" value="Chromosome"/>
</dbReference>
<dbReference type="GO" id="GO:0005829">
    <property type="term" value="C:cytosol"/>
    <property type="evidence" value="ECO:0007669"/>
    <property type="project" value="TreeGrafter"/>
</dbReference>
<dbReference type="GO" id="GO:0004477">
    <property type="term" value="F:methenyltetrahydrofolate cyclohydrolase activity"/>
    <property type="evidence" value="ECO:0007669"/>
    <property type="project" value="UniProtKB-UniRule"/>
</dbReference>
<dbReference type="GO" id="GO:0004488">
    <property type="term" value="F:methylenetetrahydrofolate dehydrogenase (NADP+) activity"/>
    <property type="evidence" value="ECO:0007669"/>
    <property type="project" value="UniProtKB-UniRule"/>
</dbReference>
<dbReference type="GO" id="GO:0000105">
    <property type="term" value="P:L-histidine biosynthetic process"/>
    <property type="evidence" value="ECO:0007669"/>
    <property type="project" value="UniProtKB-KW"/>
</dbReference>
<dbReference type="GO" id="GO:0009086">
    <property type="term" value="P:methionine biosynthetic process"/>
    <property type="evidence" value="ECO:0007669"/>
    <property type="project" value="UniProtKB-KW"/>
</dbReference>
<dbReference type="GO" id="GO:0006164">
    <property type="term" value="P:purine nucleotide biosynthetic process"/>
    <property type="evidence" value="ECO:0007669"/>
    <property type="project" value="UniProtKB-KW"/>
</dbReference>
<dbReference type="GO" id="GO:0035999">
    <property type="term" value="P:tetrahydrofolate interconversion"/>
    <property type="evidence" value="ECO:0007669"/>
    <property type="project" value="UniProtKB-UniRule"/>
</dbReference>
<dbReference type="CDD" id="cd01080">
    <property type="entry name" value="NAD_bind_m-THF_DH_Cyclohyd"/>
    <property type="match status" value="1"/>
</dbReference>
<dbReference type="FunFam" id="3.40.50.10860:FF:000001">
    <property type="entry name" value="Bifunctional protein FolD"/>
    <property type="match status" value="1"/>
</dbReference>
<dbReference type="FunFam" id="3.40.50.720:FF:000094">
    <property type="entry name" value="Bifunctional protein FolD"/>
    <property type="match status" value="1"/>
</dbReference>
<dbReference type="Gene3D" id="3.40.50.10860">
    <property type="entry name" value="Leucine Dehydrogenase, chain A, domain 1"/>
    <property type="match status" value="1"/>
</dbReference>
<dbReference type="Gene3D" id="3.40.50.720">
    <property type="entry name" value="NAD(P)-binding Rossmann-like Domain"/>
    <property type="match status" value="1"/>
</dbReference>
<dbReference type="HAMAP" id="MF_01576">
    <property type="entry name" value="THF_DHG_CYH"/>
    <property type="match status" value="1"/>
</dbReference>
<dbReference type="InterPro" id="IPR046346">
    <property type="entry name" value="Aminoacid_DH-like_N_sf"/>
</dbReference>
<dbReference type="InterPro" id="IPR036291">
    <property type="entry name" value="NAD(P)-bd_dom_sf"/>
</dbReference>
<dbReference type="InterPro" id="IPR000672">
    <property type="entry name" value="THF_DH/CycHdrlase"/>
</dbReference>
<dbReference type="InterPro" id="IPR020630">
    <property type="entry name" value="THF_DH/CycHdrlase_cat_dom"/>
</dbReference>
<dbReference type="InterPro" id="IPR020631">
    <property type="entry name" value="THF_DH/CycHdrlase_NAD-bd_dom"/>
</dbReference>
<dbReference type="NCBIfam" id="NF010772">
    <property type="entry name" value="PRK14175.1"/>
    <property type="match status" value="1"/>
</dbReference>
<dbReference type="PANTHER" id="PTHR48099:SF5">
    <property type="entry name" value="C-1-TETRAHYDROFOLATE SYNTHASE, CYTOPLASMIC"/>
    <property type="match status" value="1"/>
</dbReference>
<dbReference type="PANTHER" id="PTHR48099">
    <property type="entry name" value="C-1-TETRAHYDROFOLATE SYNTHASE, CYTOPLASMIC-RELATED"/>
    <property type="match status" value="1"/>
</dbReference>
<dbReference type="Pfam" id="PF00763">
    <property type="entry name" value="THF_DHG_CYH"/>
    <property type="match status" value="1"/>
</dbReference>
<dbReference type="Pfam" id="PF02882">
    <property type="entry name" value="THF_DHG_CYH_C"/>
    <property type="match status" value="1"/>
</dbReference>
<dbReference type="PRINTS" id="PR00085">
    <property type="entry name" value="THFDHDRGNASE"/>
</dbReference>
<dbReference type="SUPFAM" id="SSF53223">
    <property type="entry name" value="Aminoacid dehydrogenase-like, N-terminal domain"/>
    <property type="match status" value="1"/>
</dbReference>
<dbReference type="SUPFAM" id="SSF51735">
    <property type="entry name" value="NAD(P)-binding Rossmann-fold domains"/>
    <property type="match status" value="1"/>
</dbReference>
<accession>B9EAY2</accession>
<sequence length="282" mass="29861">MPAKVLDGKKIAADYRANLAQEVEQLKAQGVTPNLTVILVGNDGASQSYVNNKKKSAEKIGMSSSIIHLDESTTEAALLEEIDKLNNDDNVHGILVQVPLPKQIDETKVLEKIAPEKDVDGFNPINIGRLYAGVETYIPCTPLGIMEILKHADIDLEGKDVAVIGRSHIVGQPVAKLLTDANATVTLLHSRSKDMDAVLKRSDVIVSAVGKPGLVTKDVVKQGAVIVDVGNTVVDGKLTGDVVYDEVSEVAGAITPVPGGVGPLTITMVLNNTLLAAKRAQQ</sequence>
<evidence type="ECO:0000255" key="1">
    <source>
        <dbReference type="HAMAP-Rule" id="MF_01576"/>
    </source>
</evidence>
<comment type="function">
    <text evidence="1">Catalyzes the oxidation of 5,10-methylenetetrahydrofolate to 5,10-methenyltetrahydrofolate and then the hydrolysis of 5,10-methenyltetrahydrofolate to 10-formyltetrahydrofolate.</text>
</comment>
<comment type="catalytic activity">
    <reaction evidence="1">
        <text>(6R)-5,10-methylene-5,6,7,8-tetrahydrofolate + NADP(+) = (6R)-5,10-methenyltetrahydrofolate + NADPH</text>
        <dbReference type="Rhea" id="RHEA:22812"/>
        <dbReference type="ChEBI" id="CHEBI:15636"/>
        <dbReference type="ChEBI" id="CHEBI:57455"/>
        <dbReference type="ChEBI" id="CHEBI:57783"/>
        <dbReference type="ChEBI" id="CHEBI:58349"/>
        <dbReference type="EC" id="1.5.1.5"/>
    </reaction>
</comment>
<comment type="catalytic activity">
    <reaction evidence="1">
        <text>(6R)-5,10-methenyltetrahydrofolate + H2O = (6R)-10-formyltetrahydrofolate + H(+)</text>
        <dbReference type="Rhea" id="RHEA:23700"/>
        <dbReference type="ChEBI" id="CHEBI:15377"/>
        <dbReference type="ChEBI" id="CHEBI:15378"/>
        <dbReference type="ChEBI" id="CHEBI:57455"/>
        <dbReference type="ChEBI" id="CHEBI:195366"/>
        <dbReference type="EC" id="3.5.4.9"/>
    </reaction>
</comment>
<comment type="pathway">
    <text evidence="1">One-carbon metabolism; tetrahydrofolate interconversion.</text>
</comment>
<comment type="subunit">
    <text evidence="1">Homodimer.</text>
</comment>
<comment type="similarity">
    <text evidence="1">Belongs to the tetrahydrofolate dehydrogenase/cyclohydrolase family.</text>
</comment>
<protein>
    <recommendedName>
        <fullName evidence="1">Bifunctional protein FolD</fullName>
    </recommendedName>
    <domain>
        <recommendedName>
            <fullName evidence="1">Methylenetetrahydrofolate dehydrogenase</fullName>
            <ecNumber evidence="1">1.5.1.5</ecNumber>
        </recommendedName>
    </domain>
    <domain>
        <recommendedName>
            <fullName evidence="1">Methenyltetrahydrofolate cyclohydrolase</fullName>
            <ecNumber evidence="1">3.5.4.9</ecNumber>
        </recommendedName>
    </domain>
</protein>
<feature type="chain" id="PRO_1000185620" description="Bifunctional protein FolD">
    <location>
        <begin position="1"/>
        <end position="282"/>
    </location>
</feature>
<feature type="binding site" evidence="1">
    <location>
        <begin position="165"/>
        <end position="167"/>
    </location>
    <ligand>
        <name>NADP(+)</name>
        <dbReference type="ChEBI" id="CHEBI:58349"/>
    </ligand>
</feature>
<feature type="binding site" evidence="1">
    <location>
        <position position="190"/>
    </location>
    <ligand>
        <name>NADP(+)</name>
        <dbReference type="ChEBI" id="CHEBI:58349"/>
    </ligand>
</feature>
<reference key="1">
    <citation type="journal article" date="2009" name="J. Bacteriol.">
        <title>Complete genome sequence of Macrococcus caseolyticus strain JCSCS5402, reflecting the ancestral genome of the human-pathogenic staphylococci.</title>
        <authorList>
            <person name="Baba T."/>
            <person name="Kuwahara-Arai K."/>
            <person name="Uchiyama I."/>
            <person name="Takeuchi F."/>
            <person name="Ito T."/>
            <person name="Hiramatsu K."/>
        </authorList>
    </citation>
    <scope>NUCLEOTIDE SEQUENCE [LARGE SCALE GENOMIC DNA]</scope>
    <source>
        <strain>JCSC5402</strain>
    </source>
</reference>
<organism>
    <name type="scientific">Macrococcus caseolyticus (strain JCSC5402)</name>
    <name type="common">Macrococcoides caseolyticum</name>
    <dbReference type="NCBI Taxonomy" id="458233"/>
    <lineage>
        <taxon>Bacteria</taxon>
        <taxon>Bacillati</taxon>
        <taxon>Bacillota</taxon>
        <taxon>Bacilli</taxon>
        <taxon>Bacillales</taxon>
        <taxon>Staphylococcaceae</taxon>
        <taxon>Macrococcoides</taxon>
    </lineage>
</organism>
<keyword id="KW-0028">Amino-acid biosynthesis</keyword>
<keyword id="KW-0368">Histidine biosynthesis</keyword>
<keyword id="KW-0378">Hydrolase</keyword>
<keyword id="KW-0486">Methionine biosynthesis</keyword>
<keyword id="KW-0511">Multifunctional enzyme</keyword>
<keyword id="KW-0521">NADP</keyword>
<keyword id="KW-0554">One-carbon metabolism</keyword>
<keyword id="KW-0560">Oxidoreductase</keyword>
<keyword id="KW-0658">Purine biosynthesis</keyword>
<keyword id="KW-1185">Reference proteome</keyword>
<name>FOLD_MACCJ</name>
<gene>
    <name evidence="1" type="primary">folD</name>
    <name type="ordered locus">MCCL_0686</name>
</gene>
<proteinExistence type="inferred from homology"/>